<name>RM49_MOUSE</name>
<proteinExistence type="evidence at protein level"/>
<comment type="subunit">
    <text evidence="1 2">Component of the mitochondrial ribosome large subunit (39S) which comprises a 16S rRNA and about 50 distinct proteins (By similarity). Interacts with OXA1L (By similarity).</text>
</comment>
<comment type="subcellular location">
    <subcellularLocation>
        <location evidence="1">Mitochondrion</location>
    </subcellularLocation>
</comment>
<comment type="similarity">
    <text evidence="4">Belongs to the mitochondrion-specific ribosomal protein mL49 family.</text>
</comment>
<gene>
    <name type="primary">Mrpl49</name>
</gene>
<feature type="chain" id="PRO_0000207666" description="Large ribosomal subunit protein mL49">
    <location>
        <begin position="1"/>
        <end position="166"/>
    </location>
</feature>
<feature type="region of interest" description="Disordered" evidence="3">
    <location>
        <begin position="54"/>
        <end position="77"/>
    </location>
</feature>
<feature type="sequence conflict" description="In Ref. 1; BAC33922." evidence="4" ref="1">
    <original>Y</original>
    <variation>N</variation>
    <location>
        <position position="152"/>
    </location>
</feature>
<sequence>MAAAVLRAALQDWRSCLGRSYGRRKLSQTQGPPDNPGFVESVDEYQFVERLLPPTKIPEPPKHKHYPTPSGWQPPRDPLPSLPYFVRRSRMHNIPVYKEITHGNRQMTLIRKVEGDIWALQKDVEEFLSPLLGKTPITQVNEVTGTLRIKGYFDEQLKAWLLEKGF</sequence>
<accession>Q9CQ40</accession>
<accession>Q3UC21</accession>
<accession>Q8C5R0</accession>
<accession>Q8C7P3</accession>
<dbReference type="EMBL" id="AK007712">
    <property type="protein sequence ID" value="BAB25205.1"/>
    <property type="molecule type" value="mRNA"/>
</dbReference>
<dbReference type="EMBL" id="AK014723">
    <property type="protein sequence ID" value="BAB29520.1"/>
    <property type="molecule type" value="mRNA"/>
</dbReference>
<dbReference type="EMBL" id="AK027949">
    <property type="protein sequence ID" value="BAC25678.1"/>
    <property type="molecule type" value="mRNA"/>
</dbReference>
<dbReference type="EMBL" id="AK049794">
    <property type="protein sequence ID" value="BAC33922.1"/>
    <property type="molecule type" value="mRNA"/>
</dbReference>
<dbReference type="EMBL" id="AK077397">
    <property type="protein sequence ID" value="BAC36782.1"/>
    <property type="molecule type" value="mRNA"/>
</dbReference>
<dbReference type="EMBL" id="AK150572">
    <property type="protein sequence ID" value="BAE29667.1"/>
    <property type="molecule type" value="mRNA"/>
</dbReference>
<dbReference type="EMBL" id="AK150715">
    <property type="protein sequence ID" value="BAE29793.1"/>
    <property type="molecule type" value="mRNA"/>
</dbReference>
<dbReference type="EMBL" id="BC028956">
    <property type="protein sequence ID" value="AAH28956.1"/>
    <property type="molecule type" value="mRNA"/>
</dbReference>
<dbReference type="CCDS" id="CCDS29488.1"/>
<dbReference type="RefSeq" id="NP_080522.1">
    <property type="nucleotide sequence ID" value="NM_026246.4"/>
</dbReference>
<dbReference type="SMR" id="Q9CQ40"/>
<dbReference type="BioGRID" id="201802">
    <property type="interactions" value="35"/>
</dbReference>
<dbReference type="ComplexPortal" id="CPX-5302">
    <property type="entry name" value="39S mitochondrial large ribosomal subunit"/>
</dbReference>
<dbReference type="FunCoup" id="Q9CQ40">
    <property type="interactions" value="2994"/>
</dbReference>
<dbReference type="STRING" id="10090.ENSMUSP00000007482"/>
<dbReference type="PhosphoSitePlus" id="Q9CQ40"/>
<dbReference type="jPOST" id="Q9CQ40"/>
<dbReference type="PaxDb" id="10090-ENSMUSP00000007482"/>
<dbReference type="PeptideAtlas" id="Q9CQ40"/>
<dbReference type="ProteomicsDB" id="299864"/>
<dbReference type="Pumba" id="Q9CQ40"/>
<dbReference type="Antibodypedia" id="29687">
    <property type="antibodies" value="118 antibodies from 23 providers"/>
</dbReference>
<dbReference type="DNASU" id="18120"/>
<dbReference type="Ensembl" id="ENSMUST00000007482.8">
    <property type="protein sequence ID" value="ENSMUSP00000007482.7"/>
    <property type="gene ID" value="ENSMUSG00000007338.11"/>
</dbReference>
<dbReference type="GeneID" id="18120"/>
<dbReference type="KEGG" id="mmu:18120"/>
<dbReference type="UCSC" id="uc008ggq.1">
    <property type="organism name" value="mouse"/>
</dbReference>
<dbReference type="AGR" id="MGI:108180"/>
<dbReference type="CTD" id="740"/>
<dbReference type="MGI" id="MGI:108180">
    <property type="gene designation" value="Mrpl49"/>
</dbReference>
<dbReference type="VEuPathDB" id="HostDB:ENSMUSG00000007338"/>
<dbReference type="eggNOG" id="KOG4034">
    <property type="taxonomic scope" value="Eukaryota"/>
</dbReference>
<dbReference type="GeneTree" id="ENSGT00390000017253"/>
<dbReference type="HOGENOM" id="CLU_085757_2_3_1"/>
<dbReference type="InParanoid" id="Q9CQ40"/>
<dbReference type="OMA" id="NPPEWKY"/>
<dbReference type="OrthoDB" id="19439at2759"/>
<dbReference type="PhylomeDB" id="Q9CQ40"/>
<dbReference type="TreeFam" id="TF317750"/>
<dbReference type="Reactome" id="R-MMU-5389840">
    <property type="pathway name" value="Mitochondrial translation elongation"/>
</dbReference>
<dbReference type="Reactome" id="R-MMU-5419276">
    <property type="pathway name" value="Mitochondrial translation termination"/>
</dbReference>
<dbReference type="BioGRID-ORCS" id="18120">
    <property type="hits" value="21 hits in 80 CRISPR screens"/>
</dbReference>
<dbReference type="PRO" id="PR:Q9CQ40"/>
<dbReference type="Proteomes" id="UP000000589">
    <property type="component" value="Chromosome 19"/>
</dbReference>
<dbReference type="RNAct" id="Q9CQ40">
    <property type="molecule type" value="protein"/>
</dbReference>
<dbReference type="Bgee" id="ENSMUSG00000007338">
    <property type="expression patterns" value="Expressed in yolk sac and 253 other cell types or tissues"/>
</dbReference>
<dbReference type="ExpressionAtlas" id="Q9CQ40">
    <property type="expression patterns" value="baseline and differential"/>
</dbReference>
<dbReference type="GO" id="GO:0005743">
    <property type="term" value="C:mitochondrial inner membrane"/>
    <property type="evidence" value="ECO:0000303"/>
    <property type="project" value="ComplexPortal"/>
</dbReference>
<dbReference type="GO" id="GO:0005762">
    <property type="term" value="C:mitochondrial large ribosomal subunit"/>
    <property type="evidence" value="ECO:0000250"/>
    <property type="project" value="UniProtKB"/>
</dbReference>
<dbReference type="GO" id="GO:0005761">
    <property type="term" value="C:mitochondrial ribosome"/>
    <property type="evidence" value="ECO:0000250"/>
    <property type="project" value="UniProtKB"/>
</dbReference>
<dbReference type="GO" id="GO:0005739">
    <property type="term" value="C:mitochondrion"/>
    <property type="evidence" value="ECO:0007005"/>
    <property type="project" value="MGI"/>
</dbReference>
<dbReference type="GO" id="GO:0003735">
    <property type="term" value="F:structural constituent of ribosome"/>
    <property type="evidence" value="ECO:0007669"/>
    <property type="project" value="InterPro"/>
</dbReference>
<dbReference type="GO" id="GO:0032543">
    <property type="term" value="P:mitochondrial translation"/>
    <property type="evidence" value="ECO:0000303"/>
    <property type="project" value="ComplexPortal"/>
</dbReference>
<dbReference type="FunFam" id="3.30.780.10:FF:000009">
    <property type="entry name" value="39S ribosomal protein L49, mitochondrial"/>
    <property type="match status" value="1"/>
</dbReference>
<dbReference type="Gene3D" id="3.30.780.10">
    <property type="entry name" value="SUI1-like domain"/>
    <property type="match status" value="1"/>
</dbReference>
<dbReference type="InterPro" id="IPR007740">
    <property type="entry name" value="Ribosomal_mL49"/>
</dbReference>
<dbReference type="PANTHER" id="PTHR13477:SF0">
    <property type="entry name" value="LARGE RIBOSOMAL SUBUNIT PROTEIN ML49"/>
    <property type="match status" value="1"/>
</dbReference>
<dbReference type="PANTHER" id="PTHR13477">
    <property type="entry name" value="MITOCHONDRIAL 39S RIBOSOMAL PROTEIN L49"/>
    <property type="match status" value="1"/>
</dbReference>
<dbReference type="Pfam" id="PF05046">
    <property type="entry name" value="Img2"/>
    <property type="match status" value="1"/>
</dbReference>
<evidence type="ECO:0000250" key="1">
    <source>
        <dbReference type="UniProtKB" id="Q13405"/>
    </source>
</evidence>
<evidence type="ECO:0000250" key="2">
    <source>
        <dbReference type="UniProtKB" id="Q5EA71"/>
    </source>
</evidence>
<evidence type="ECO:0000256" key="3">
    <source>
        <dbReference type="SAM" id="MobiDB-lite"/>
    </source>
</evidence>
<evidence type="ECO:0000305" key="4"/>
<reference key="1">
    <citation type="journal article" date="2005" name="Science">
        <title>The transcriptional landscape of the mammalian genome.</title>
        <authorList>
            <person name="Carninci P."/>
            <person name="Kasukawa T."/>
            <person name="Katayama S."/>
            <person name="Gough J."/>
            <person name="Frith M.C."/>
            <person name="Maeda N."/>
            <person name="Oyama R."/>
            <person name="Ravasi T."/>
            <person name="Lenhard B."/>
            <person name="Wells C."/>
            <person name="Kodzius R."/>
            <person name="Shimokawa K."/>
            <person name="Bajic V.B."/>
            <person name="Brenner S.E."/>
            <person name="Batalov S."/>
            <person name="Forrest A.R."/>
            <person name="Zavolan M."/>
            <person name="Davis M.J."/>
            <person name="Wilming L.G."/>
            <person name="Aidinis V."/>
            <person name="Allen J.E."/>
            <person name="Ambesi-Impiombato A."/>
            <person name="Apweiler R."/>
            <person name="Aturaliya R.N."/>
            <person name="Bailey T.L."/>
            <person name="Bansal M."/>
            <person name="Baxter L."/>
            <person name="Beisel K.W."/>
            <person name="Bersano T."/>
            <person name="Bono H."/>
            <person name="Chalk A.M."/>
            <person name="Chiu K.P."/>
            <person name="Choudhary V."/>
            <person name="Christoffels A."/>
            <person name="Clutterbuck D.R."/>
            <person name="Crowe M.L."/>
            <person name="Dalla E."/>
            <person name="Dalrymple B.P."/>
            <person name="de Bono B."/>
            <person name="Della Gatta G."/>
            <person name="di Bernardo D."/>
            <person name="Down T."/>
            <person name="Engstrom P."/>
            <person name="Fagiolini M."/>
            <person name="Faulkner G."/>
            <person name="Fletcher C.F."/>
            <person name="Fukushima T."/>
            <person name="Furuno M."/>
            <person name="Futaki S."/>
            <person name="Gariboldi M."/>
            <person name="Georgii-Hemming P."/>
            <person name="Gingeras T.R."/>
            <person name="Gojobori T."/>
            <person name="Green R.E."/>
            <person name="Gustincich S."/>
            <person name="Harbers M."/>
            <person name="Hayashi Y."/>
            <person name="Hensch T.K."/>
            <person name="Hirokawa N."/>
            <person name="Hill D."/>
            <person name="Huminiecki L."/>
            <person name="Iacono M."/>
            <person name="Ikeo K."/>
            <person name="Iwama A."/>
            <person name="Ishikawa T."/>
            <person name="Jakt M."/>
            <person name="Kanapin A."/>
            <person name="Katoh M."/>
            <person name="Kawasawa Y."/>
            <person name="Kelso J."/>
            <person name="Kitamura H."/>
            <person name="Kitano H."/>
            <person name="Kollias G."/>
            <person name="Krishnan S.P."/>
            <person name="Kruger A."/>
            <person name="Kummerfeld S.K."/>
            <person name="Kurochkin I.V."/>
            <person name="Lareau L.F."/>
            <person name="Lazarevic D."/>
            <person name="Lipovich L."/>
            <person name="Liu J."/>
            <person name="Liuni S."/>
            <person name="McWilliam S."/>
            <person name="Madan Babu M."/>
            <person name="Madera M."/>
            <person name="Marchionni L."/>
            <person name="Matsuda H."/>
            <person name="Matsuzawa S."/>
            <person name="Miki H."/>
            <person name="Mignone F."/>
            <person name="Miyake S."/>
            <person name="Morris K."/>
            <person name="Mottagui-Tabar S."/>
            <person name="Mulder N."/>
            <person name="Nakano N."/>
            <person name="Nakauchi H."/>
            <person name="Ng P."/>
            <person name="Nilsson R."/>
            <person name="Nishiguchi S."/>
            <person name="Nishikawa S."/>
            <person name="Nori F."/>
            <person name="Ohara O."/>
            <person name="Okazaki Y."/>
            <person name="Orlando V."/>
            <person name="Pang K.C."/>
            <person name="Pavan W.J."/>
            <person name="Pavesi G."/>
            <person name="Pesole G."/>
            <person name="Petrovsky N."/>
            <person name="Piazza S."/>
            <person name="Reed J."/>
            <person name="Reid J.F."/>
            <person name="Ring B.Z."/>
            <person name="Ringwald M."/>
            <person name="Rost B."/>
            <person name="Ruan Y."/>
            <person name="Salzberg S.L."/>
            <person name="Sandelin A."/>
            <person name="Schneider C."/>
            <person name="Schoenbach C."/>
            <person name="Sekiguchi K."/>
            <person name="Semple C.A."/>
            <person name="Seno S."/>
            <person name="Sessa L."/>
            <person name="Sheng Y."/>
            <person name="Shibata Y."/>
            <person name="Shimada H."/>
            <person name="Shimada K."/>
            <person name="Silva D."/>
            <person name="Sinclair B."/>
            <person name="Sperling S."/>
            <person name="Stupka E."/>
            <person name="Sugiura K."/>
            <person name="Sultana R."/>
            <person name="Takenaka Y."/>
            <person name="Taki K."/>
            <person name="Tammoja K."/>
            <person name="Tan S.L."/>
            <person name="Tang S."/>
            <person name="Taylor M.S."/>
            <person name="Tegner J."/>
            <person name="Teichmann S.A."/>
            <person name="Ueda H.R."/>
            <person name="van Nimwegen E."/>
            <person name="Verardo R."/>
            <person name="Wei C.L."/>
            <person name="Yagi K."/>
            <person name="Yamanishi H."/>
            <person name="Zabarovsky E."/>
            <person name="Zhu S."/>
            <person name="Zimmer A."/>
            <person name="Hide W."/>
            <person name="Bult C."/>
            <person name="Grimmond S.M."/>
            <person name="Teasdale R.D."/>
            <person name="Liu E.T."/>
            <person name="Brusic V."/>
            <person name="Quackenbush J."/>
            <person name="Wahlestedt C."/>
            <person name="Mattick J.S."/>
            <person name="Hume D.A."/>
            <person name="Kai C."/>
            <person name="Sasaki D."/>
            <person name="Tomaru Y."/>
            <person name="Fukuda S."/>
            <person name="Kanamori-Katayama M."/>
            <person name="Suzuki M."/>
            <person name="Aoki J."/>
            <person name="Arakawa T."/>
            <person name="Iida J."/>
            <person name="Imamura K."/>
            <person name="Itoh M."/>
            <person name="Kato T."/>
            <person name="Kawaji H."/>
            <person name="Kawagashira N."/>
            <person name="Kawashima T."/>
            <person name="Kojima M."/>
            <person name="Kondo S."/>
            <person name="Konno H."/>
            <person name="Nakano K."/>
            <person name="Ninomiya N."/>
            <person name="Nishio T."/>
            <person name="Okada M."/>
            <person name="Plessy C."/>
            <person name="Shibata K."/>
            <person name="Shiraki T."/>
            <person name="Suzuki S."/>
            <person name="Tagami M."/>
            <person name="Waki K."/>
            <person name="Watahiki A."/>
            <person name="Okamura-Oho Y."/>
            <person name="Suzuki H."/>
            <person name="Kawai J."/>
            <person name="Hayashizaki Y."/>
        </authorList>
    </citation>
    <scope>NUCLEOTIDE SEQUENCE [LARGE SCALE MRNA]</scope>
    <source>
        <strain>C57BL/6J</strain>
        <tissue>Bone marrow</tissue>
        <tissue>Head</tissue>
        <tissue>Pancreas</tissue>
    </source>
</reference>
<reference key="2">
    <citation type="journal article" date="2004" name="Genome Res.">
        <title>The status, quality, and expansion of the NIH full-length cDNA project: the Mammalian Gene Collection (MGC).</title>
        <authorList>
            <consortium name="The MGC Project Team"/>
        </authorList>
    </citation>
    <scope>NUCLEOTIDE SEQUENCE [LARGE SCALE MRNA]</scope>
    <source>
        <tissue>Eye</tissue>
    </source>
</reference>
<reference key="3">
    <citation type="journal article" date="2010" name="Cell">
        <title>A tissue-specific atlas of mouse protein phosphorylation and expression.</title>
        <authorList>
            <person name="Huttlin E.L."/>
            <person name="Jedrychowski M.P."/>
            <person name="Elias J.E."/>
            <person name="Goswami T."/>
            <person name="Rad R."/>
            <person name="Beausoleil S.A."/>
            <person name="Villen J."/>
            <person name="Haas W."/>
            <person name="Sowa M.E."/>
            <person name="Gygi S.P."/>
        </authorList>
    </citation>
    <scope>IDENTIFICATION BY MASS SPECTROMETRY [LARGE SCALE ANALYSIS]</scope>
    <source>
        <tissue>Brown adipose tissue</tissue>
        <tissue>Heart</tissue>
        <tissue>Kidney</tissue>
        <tissue>Liver</tissue>
        <tissue>Spleen</tissue>
        <tissue>Testis</tissue>
    </source>
</reference>
<organism>
    <name type="scientific">Mus musculus</name>
    <name type="common">Mouse</name>
    <dbReference type="NCBI Taxonomy" id="10090"/>
    <lineage>
        <taxon>Eukaryota</taxon>
        <taxon>Metazoa</taxon>
        <taxon>Chordata</taxon>
        <taxon>Craniata</taxon>
        <taxon>Vertebrata</taxon>
        <taxon>Euteleostomi</taxon>
        <taxon>Mammalia</taxon>
        <taxon>Eutheria</taxon>
        <taxon>Euarchontoglires</taxon>
        <taxon>Glires</taxon>
        <taxon>Rodentia</taxon>
        <taxon>Myomorpha</taxon>
        <taxon>Muroidea</taxon>
        <taxon>Muridae</taxon>
        <taxon>Murinae</taxon>
        <taxon>Mus</taxon>
        <taxon>Mus</taxon>
    </lineage>
</organism>
<keyword id="KW-0496">Mitochondrion</keyword>
<keyword id="KW-1185">Reference proteome</keyword>
<keyword id="KW-0687">Ribonucleoprotein</keyword>
<keyword id="KW-0689">Ribosomal protein</keyword>
<protein>
    <recommendedName>
        <fullName evidence="4">Large ribosomal subunit protein mL49</fullName>
    </recommendedName>
    <alternativeName>
        <fullName>39S ribosomal protein L49, mitochondrial</fullName>
        <shortName>L49mt</shortName>
        <shortName>MRP-L49</shortName>
    </alternativeName>
</protein>